<dbReference type="EC" id="3.1.1.96" evidence="1"/>
<dbReference type="EMBL" id="CP001400">
    <property type="protein sequence ID" value="ACP36944.1"/>
    <property type="molecule type" value="Genomic_DNA"/>
</dbReference>
<dbReference type="RefSeq" id="WP_012710231.1">
    <property type="nucleotide sequence ID" value="NC_012588.1"/>
</dbReference>
<dbReference type="SMR" id="C3MTR0"/>
<dbReference type="KEGG" id="sia:M1425_0052"/>
<dbReference type="HOGENOM" id="CLU_056464_1_0_2"/>
<dbReference type="Proteomes" id="UP000001350">
    <property type="component" value="Chromosome"/>
</dbReference>
<dbReference type="GO" id="GO:0051499">
    <property type="term" value="F:D-aminoacyl-tRNA deacylase activity"/>
    <property type="evidence" value="ECO:0007669"/>
    <property type="project" value="UniProtKB-UniRule"/>
</dbReference>
<dbReference type="GO" id="GO:0008270">
    <property type="term" value="F:zinc ion binding"/>
    <property type="evidence" value="ECO:0007669"/>
    <property type="project" value="UniProtKB-UniRule"/>
</dbReference>
<dbReference type="GO" id="GO:0019478">
    <property type="term" value="P:D-amino acid catabolic process"/>
    <property type="evidence" value="ECO:0007669"/>
    <property type="project" value="UniProtKB-UniRule"/>
</dbReference>
<dbReference type="Gene3D" id="3.40.50.10700">
    <property type="entry name" value="AF0625-like"/>
    <property type="match status" value="1"/>
</dbReference>
<dbReference type="Gene3D" id="3.40.630.50">
    <property type="entry name" value="AF0625-like"/>
    <property type="match status" value="1"/>
</dbReference>
<dbReference type="HAMAP" id="MF_00562">
    <property type="entry name" value="Deacylase_DtdA"/>
    <property type="match status" value="1"/>
</dbReference>
<dbReference type="InterPro" id="IPR018033">
    <property type="entry name" value="Deacylase_DtdA_archaea"/>
</dbReference>
<dbReference type="InterPro" id="IPR007508">
    <property type="entry name" value="DtdA"/>
</dbReference>
<dbReference type="NCBIfam" id="NF003070">
    <property type="entry name" value="PRK03995.1-1"/>
    <property type="match status" value="1"/>
</dbReference>
<dbReference type="PANTHER" id="PTHR34667">
    <property type="entry name" value="D-AMINOACYL-TRNA DEACYLASE"/>
    <property type="match status" value="1"/>
</dbReference>
<dbReference type="PANTHER" id="PTHR34667:SF1">
    <property type="entry name" value="D-AMINOACYL-TRNA DEACYLASE"/>
    <property type="match status" value="1"/>
</dbReference>
<dbReference type="Pfam" id="PF04414">
    <property type="entry name" value="tRNA_deacylase"/>
    <property type="match status" value="1"/>
</dbReference>
<dbReference type="PIRSF" id="PIRSF016210">
    <property type="entry name" value="UCP016210"/>
    <property type="match status" value="1"/>
</dbReference>
<dbReference type="SUPFAM" id="SSF142535">
    <property type="entry name" value="AF0625-like"/>
    <property type="match status" value="1"/>
</dbReference>
<feature type="chain" id="PRO_1000212047" description="D-aminoacyl-tRNA deacylase">
    <location>
        <begin position="1"/>
        <end position="237"/>
    </location>
</feature>
<evidence type="ECO:0000255" key="1">
    <source>
        <dbReference type="HAMAP-Rule" id="MF_00562"/>
    </source>
</evidence>
<name>DTDA_SACI4</name>
<accession>C3MTR0</accession>
<sequence length="237" mass="26762">MDIKLVYSTSDPVGLTIKKLGYSFEEIDEDVTDFHYKNGEAIVIFSRHESKASIPSLTVHYPGNPSEEVMGGEPKKLGIAYPRLLTSILREIKKIDLDIEKTMEATHHGPTYQNVPVIFVEIGSDKTYWTNERIVRTLVDSTLKGIDKVDETDCRDYISGFGGPHYSKLFTKLADESCIGHVISKHYVDKLDDKVIIQAIANSVNNINKVVIDSLNLKQRERIIAALKSFDIHIQLR</sequence>
<comment type="function">
    <text evidence="1">D-aminoacyl-tRNA deacylase with broad substrate specificity. By recycling D-aminoacyl-tRNA to D-amino acids and free tRNA molecules, this enzyme counteracts the toxicity associated with the formation of D-aminoacyl-tRNA entities in vivo.</text>
</comment>
<comment type="catalytic activity">
    <reaction evidence="1">
        <text>a D-aminoacyl-tRNA + H2O = a tRNA + a D-alpha-amino acid + H(+)</text>
        <dbReference type="Rhea" id="RHEA:13953"/>
        <dbReference type="Rhea" id="RHEA-COMP:10123"/>
        <dbReference type="Rhea" id="RHEA-COMP:10124"/>
        <dbReference type="ChEBI" id="CHEBI:15377"/>
        <dbReference type="ChEBI" id="CHEBI:15378"/>
        <dbReference type="ChEBI" id="CHEBI:59871"/>
        <dbReference type="ChEBI" id="CHEBI:78442"/>
        <dbReference type="ChEBI" id="CHEBI:79333"/>
        <dbReference type="EC" id="3.1.1.96"/>
    </reaction>
</comment>
<comment type="catalytic activity">
    <reaction evidence="1">
        <text>glycyl-tRNA(Ala) + H2O = tRNA(Ala) + glycine + H(+)</text>
        <dbReference type="Rhea" id="RHEA:53744"/>
        <dbReference type="Rhea" id="RHEA-COMP:9657"/>
        <dbReference type="Rhea" id="RHEA-COMP:13640"/>
        <dbReference type="ChEBI" id="CHEBI:15377"/>
        <dbReference type="ChEBI" id="CHEBI:15378"/>
        <dbReference type="ChEBI" id="CHEBI:57305"/>
        <dbReference type="ChEBI" id="CHEBI:78442"/>
        <dbReference type="ChEBI" id="CHEBI:78522"/>
        <dbReference type="EC" id="3.1.1.96"/>
    </reaction>
</comment>
<comment type="cofactor">
    <cofactor evidence="1">
        <name>Zn(2+)</name>
        <dbReference type="ChEBI" id="CHEBI:29105"/>
    </cofactor>
    <text evidence="1">Binds 2 Zn(2+) ions per subunit.</text>
</comment>
<comment type="subunit">
    <text evidence="1">Monomer.</text>
</comment>
<comment type="similarity">
    <text evidence="1">Belongs to the DtdA deacylase family.</text>
</comment>
<protein>
    <recommendedName>
        <fullName evidence="1">D-aminoacyl-tRNA deacylase</fullName>
        <ecNumber evidence="1">3.1.1.96</ecNumber>
    </recommendedName>
    <alternativeName>
        <fullName>D-tyrosyl-tRNA(Tyr) deacylase</fullName>
    </alternativeName>
</protein>
<proteinExistence type="inferred from homology"/>
<gene>
    <name evidence="1" type="primary">dtdA</name>
    <name type="ordered locus">M1425_0052</name>
</gene>
<keyword id="KW-0378">Hydrolase</keyword>
<keyword id="KW-0479">Metal-binding</keyword>
<keyword id="KW-0862">Zinc</keyword>
<organism>
    <name type="scientific">Saccharolobus islandicus (strain M.14.25 / Kamchatka #1)</name>
    <name type="common">Sulfolobus islandicus</name>
    <dbReference type="NCBI Taxonomy" id="427317"/>
    <lineage>
        <taxon>Archaea</taxon>
        <taxon>Thermoproteota</taxon>
        <taxon>Thermoprotei</taxon>
        <taxon>Sulfolobales</taxon>
        <taxon>Sulfolobaceae</taxon>
        <taxon>Saccharolobus</taxon>
    </lineage>
</organism>
<reference key="1">
    <citation type="journal article" date="2009" name="Proc. Natl. Acad. Sci. U.S.A.">
        <title>Biogeography of the Sulfolobus islandicus pan-genome.</title>
        <authorList>
            <person name="Reno M.L."/>
            <person name="Held N.L."/>
            <person name="Fields C.J."/>
            <person name="Burke P.V."/>
            <person name="Whitaker R.J."/>
        </authorList>
    </citation>
    <scope>NUCLEOTIDE SEQUENCE [LARGE SCALE GENOMIC DNA]</scope>
    <source>
        <strain>M.14.25 / Kamchatka #1</strain>
    </source>
</reference>